<sequence length="172" mass="20005">MRIALLWVAFGALALAAFESIGSFRSEFVQTIRSEDGKIIEYRGRVYAKSPYYGLWKYEKPMEKEIYIVDKQVVIYEPALEQATVSSLQNSIDFMALLRQSKRNSEGIYEATVFEQKYQILADEKGEPQKVFFIDKLHNEVQIIFKNAEINPVLEKEMFLFMPSGEIDLIRQ</sequence>
<gene>
    <name evidence="1" type="primary">lolA</name>
    <name type="ordered locus">WS1257</name>
</gene>
<evidence type="ECO:0000255" key="1">
    <source>
        <dbReference type="HAMAP-Rule" id="MF_00240"/>
    </source>
</evidence>
<feature type="signal peptide" evidence="1">
    <location>
        <begin position="1"/>
        <end position="16"/>
    </location>
</feature>
<feature type="chain" id="PRO_0000018284" description="Outer-membrane lipoprotein carrier protein">
    <location>
        <begin position="17"/>
        <end position="172"/>
    </location>
</feature>
<keyword id="KW-0143">Chaperone</keyword>
<keyword id="KW-0574">Periplasm</keyword>
<keyword id="KW-0653">Protein transport</keyword>
<keyword id="KW-1185">Reference proteome</keyword>
<keyword id="KW-0732">Signal</keyword>
<keyword id="KW-0813">Transport</keyword>
<name>LOLA_WOLSU</name>
<organism>
    <name type="scientific">Wolinella succinogenes (strain ATCC 29543 / DSM 1740 / CCUG 13145 / JCM 31913 / LMG 7466 / NCTC 11488 / FDC 602W)</name>
    <name type="common">Vibrio succinogenes</name>
    <dbReference type="NCBI Taxonomy" id="273121"/>
    <lineage>
        <taxon>Bacteria</taxon>
        <taxon>Pseudomonadati</taxon>
        <taxon>Campylobacterota</taxon>
        <taxon>Epsilonproteobacteria</taxon>
        <taxon>Campylobacterales</taxon>
        <taxon>Helicobacteraceae</taxon>
        <taxon>Wolinella</taxon>
    </lineage>
</organism>
<accession>Q7MRK6</accession>
<proteinExistence type="inferred from homology"/>
<reference key="1">
    <citation type="journal article" date="2003" name="Proc. Natl. Acad. Sci. U.S.A.">
        <title>Complete genome sequence and analysis of Wolinella succinogenes.</title>
        <authorList>
            <person name="Baar C."/>
            <person name="Eppinger M."/>
            <person name="Raddatz G."/>
            <person name="Simon J."/>
            <person name="Lanz C."/>
            <person name="Klimmek O."/>
            <person name="Nandakumar R."/>
            <person name="Gross R."/>
            <person name="Rosinus A."/>
            <person name="Keller H."/>
            <person name="Jagtap P."/>
            <person name="Linke B."/>
            <person name="Meyer F."/>
            <person name="Lederer H."/>
            <person name="Schuster S.C."/>
        </authorList>
    </citation>
    <scope>NUCLEOTIDE SEQUENCE [LARGE SCALE GENOMIC DNA]</scope>
    <source>
        <strain>ATCC 29543 / DSM 1740 / CCUG 13145 / JCM 31913 / LMG 7466 / NCTC 11488 / FDC 602W</strain>
    </source>
</reference>
<dbReference type="EMBL" id="BX571660">
    <property type="protein sequence ID" value="CAE10336.1"/>
    <property type="molecule type" value="Genomic_DNA"/>
</dbReference>
<dbReference type="RefSeq" id="WP_011139123.1">
    <property type="nucleotide sequence ID" value="NC_005090.1"/>
</dbReference>
<dbReference type="SMR" id="Q7MRK6"/>
<dbReference type="STRING" id="273121.WS1257"/>
<dbReference type="KEGG" id="wsu:WS1257"/>
<dbReference type="eggNOG" id="COG2834">
    <property type="taxonomic scope" value="Bacteria"/>
</dbReference>
<dbReference type="HOGENOM" id="CLU_125914_0_0_7"/>
<dbReference type="Proteomes" id="UP000000422">
    <property type="component" value="Chromosome"/>
</dbReference>
<dbReference type="GO" id="GO:0042597">
    <property type="term" value="C:periplasmic space"/>
    <property type="evidence" value="ECO:0007669"/>
    <property type="project" value="UniProtKB-SubCell"/>
</dbReference>
<dbReference type="GO" id="GO:0042953">
    <property type="term" value="P:lipoprotein transport"/>
    <property type="evidence" value="ECO:0007669"/>
    <property type="project" value="InterPro"/>
</dbReference>
<dbReference type="CDD" id="cd16325">
    <property type="entry name" value="LolA"/>
    <property type="match status" value="1"/>
</dbReference>
<dbReference type="Gene3D" id="2.50.20.10">
    <property type="entry name" value="Lipoprotein localisation LolA/LolB/LppX"/>
    <property type="match status" value="1"/>
</dbReference>
<dbReference type="HAMAP" id="MF_00240">
    <property type="entry name" value="LolA"/>
    <property type="match status" value="1"/>
</dbReference>
<dbReference type="InterPro" id="IPR029046">
    <property type="entry name" value="LolA/LolB/LppX"/>
</dbReference>
<dbReference type="InterPro" id="IPR004564">
    <property type="entry name" value="OM_lipoprot_carrier_LolA-like"/>
</dbReference>
<dbReference type="InterPro" id="IPR018323">
    <property type="entry name" value="OM_lipoprot_carrier_LolA_Pbac"/>
</dbReference>
<dbReference type="NCBIfam" id="NF000663">
    <property type="entry name" value="PRK00031.2-1"/>
    <property type="match status" value="1"/>
</dbReference>
<dbReference type="NCBIfam" id="NF000664">
    <property type="entry name" value="PRK00031.2-2"/>
    <property type="match status" value="1"/>
</dbReference>
<dbReference type="PANTHER" id="PTHR35869">
    <property type="entry name" value="OUTER-MEMBRANE LIPOPROTEIN CARRIER PROTEIN"/>
    <property type="match status" value="1"/>
</dbReference>
<dbReference type="PANTHER" id="PTHR35869:SF1">
    <property type="entry name" value="OUTER-MEMBRANE LIPOPROTEIN CARRIER PROTEIN"/>
    <property type="match status" value="1"/>
</dbReference>
<dbReference type="Pfam" id="PF03548">
    <property type="entry name" value="LolA"/>
    <property type="match status" value="1"/>
</dbReference>
<dbReference type="SUPFAM" id="SSF89392">
    <property type="entry name" value="Prokaryotic lipoproteins and lipoprotein localization factors"/>
    <property type="match status" value="1"/>
</dbReference>
<comment type="function">
    <text evidence="1">Participates in the translocation of lipoproteins from the inner membrane to the outer membrane. Only forms a complex with a lipoprotein if the residue after the N-terminal Cys is not an aspartate (The Asp acts as a targeting signal to indicate that the lipoprotein should stay in the inner membrane).</text>
</comment>
<comment type="subunit">
    <text evidence="1">Monomer.</text>
</comment>
<comment type="subcellular location">
    <subcellularLocation>
        <location evidence="1">Periplasm</location>
    </subcellularLocation>
</comment>
<comment type="similarity">
    <text evidence="1">Belongs to the LolA family.</text>
</comment>
<protein>
    <recommendedName>
        <fullName evidence="1">Outer-membrane lipoprotein carrier protein</fullName>
    </recommendedName>
</protein>